<proteinExistence type="inferred from homology"/>
<keyword id="KW-0030">Aminoacyl-tRNA synthetase</keyword>
<keyword id="KW-0067">ATP-binding</keyword>
<keyword id="KW-0963">Cytoplasm</keyword>
<keyword id="KW-0436">Ligase</keyword>
<keyword id="KW-0547">Nucleotide-binding</keyword>
<keyword id="KW-0648">Protein biosynthesis</keyword>
<keyword id="KW-1185">Reference proteome</keyword>
<gene>
    <name evidence="1" type="primary">ileS</name>
    <name type="ordered locus">MPN_520</name>
    <name type="ORF">MP322</name>
</gene>
<comment type="function">
    <text evidence="1">Catalyzes the attachment of isoleucine to tRNA(Ile). As IleRS can inadvertently accommodate and process structurally similar amino acids such as valine, to avoid such errors it has two additional distinct tRNA(Ile)-dependent editing activities. One activity is designated as 'pretransfer' editing and involves the hydrolysis of activated Val-AMP. The other activity is designated 'posttransfer' editing and involves deacylation of mischarged Val-tRNA(Ile).</text>
</comment>
<comment type="catalytic activity">
    <reaction evidence="1">
        <text>tRNA(Ile) + L-isoleucine + ATP = L-isoleucyl-tRNA(Ile) + AMP + diphosphate</text>
        <dbReference type="Rhea" id="RHEA:11060"/>
        <dbReference type="Rhea" id="RHEA-COMP:9666"/>
        <dbReference type="Rhea" id="RHEA-COMP:9695"/>
        <dbReference type="ChEBI" id="CHEBI:30616"/>
        <dbReference type="ChEBI" id="CHEBI:33019"/>
        <dbReference type="ChEBI" id="CHEBI:58045"/>
        <dbReference type="ChEBI" id="CHEBI:78442"/>
        <dbReference type="ChEBI" id="CHEBI:78528"/>
        <dbReference type="ChEBI" id="CHEBI:456215"/>
        <dbReference type="EC" id="6.1.1.5"/>
    </reaction>
</comment>
<comment type="subunit">
    <text evidence="1">Monomer.</text>
</comment>
<comment type="subcellular location">
    <subcellularLocation>
        <location evidence="1">Cytoplasm</location>
    </subcellularLocation>
</comment>
<comment type="domain">
    <text evidence="1">IleRS has two distinct active sites: one for aminoacylation and one for editing. The misactivated valine is translocated from the active site to the editing site, which sterically excludes the correctly activated isoleucine. The single editing site contains two valyl binding pockets, one specific for each substrate (Val-AMP or Val-tRNA(Ile)).</text>
</comment>
<comment type="similarity">
    <text evidence="1">Belongs to the class-I aminoacyl-tRNA synthetase family. IleS type 1 subfamily.</text>
</comment>
<reference key="1">
    <citation type="journal article" date="1996" name="Nucleic Acids Res.">
        <title>Complete sequence analysis of the genome of the bacterium Mycoplasma pneumoniae.</title>
        <authorList>
            <person name="Himmelreich R."/>
            <person name="Hilbert H."/>
            <person name="Plagens H."/>
            <person name="Pirkl E."/>
            <person name="Li B.-C."/>
            <person name="Herrmann R."/>
        </authorList>
    </citation>
    <scope>NUCLEOTIDE SEQUENCE [LARGE SCALE GENOMIC DNA]</scope>
    <source>
        <strain>ATCC 29342 / M129 / Subtype 1</strain>
    </source>
</reference>
<dbReference type="EC" id="6.1.1.5" evidence="1"/>
<dbReference type="EMBL" id="U00089">
    <property type="protein sequence ID" value="AAB95970.1"/>
    <property type="molecule type" value="Genomic_DNA"/>
</dbReference>
<dbReference type="PIR" id="S73648">
    <property type="entry name" value="S73648"/>
</dbReference>
<dbReference type="RefSeq" id="NP_110208.1">
    <property type="nucleotide sequence ID" value="NC_000912.1"/>
</dbReference>
<dbReference type="RefSeq" id="WP_010874876.1">
    <property type="nucleotide sequence ID" value="NC_000912.1"/>
</dbReference>
<dbReference type="SMR" id="P75258"/>
<dbReference type="STRING" id="272634.MPN_520"/>
<dbReference type="EnsemblBacteria" id="AAB95970">
    <property type="protein sequence ID" value="AAB95970"/>
    <property type="gene ID" value="MPN_520"/>
</dbReference>
<dbReference type="KEGG" id="mpn:MPN_520"/>
<dbReference type="PATRIC" id="fig|272634.6.peg.577"/>
<dbReference type="HOGENOM" id="CLU_001493_7_1_14"/>
<dbReference type="OrthoDB" id="9810365at2"/>
<dbReference type="BioCyc" id="MPNE272634:G1GJ3-853-MONOMER"/>
<dbReference type="Proteomes" id="UP000000808">
    <property type="component" value="Chromosome"/>
</dbReference>
<dbReference type="GO" id="GO:0005829">
    <property type="term" value="C:cytosol"/>
    <property type="evidence" value="ECO:0007669"/>
    <property type="project" value="TreeGrafter"/>
</dbReference>
<dbReference type="GO" id="GO:0002161">
    <property type="term" value="F:aminoacyl-tRNA deacylase activity"/>
    <property type="evidence" value="ECO:0007669"/>
    <property type="project" value="InterPro"/>
</dbReference>
<dbReference type="GO" id="GO:0005524">
    <property type="term" value="F:ATP binding"/>
    <property type="evidence" value="ECO:0007669"/>
    <property type="project" value="UniProtKB-UniRule"/>
</dbReference>
<dbReference type="GO" id="GO:0004822">
    <property type="term" value="F:isoleucine-tRNA ligase activity"/>
    <property type="evidence" value="ECO:0007669"/>
    <property type="project" value="UniProtKB-UniRule"/>
</dbReference>
<dbReference type="GO" id="GO:0000049">
    <property type="term" value="F:tRNA binding"/>
    <property type="evidence" value="ECO:0007669"/>
    <property type="project" value="InterPro"/>
</dbReference>
<dbReference type="GO" id="GO:0006428">
    <property type="term" value="P:isoleucyl-tRNA aminoacylation"/>
    <property type="evidence" value="ECO:0007669"/>
    <property type="project" value="UniProtKB-UniRule"/>
</dbReference>
<dbReference type="CDD" id="cd07960">
    <property type="entry name" value="Anticodon_Ia_Ile_BEm"/>
    <property type="match status" value="1"/>
</dbReference>
<dbReference type="Gene3D" id="1.10.730.20">
    <property type="match status" value="1"/>
</dbReference>
<dbReference type="Gene3D" id="3.40.50.620">
    <property type="entry name" value="HUPs"/>
    <property type="match status" value="2"/>
</dbReference>
<dbReference type="Gene3D" id="3.90.740.10">
    <property type="entry name" value="Valyl/Leucyl/Isoleucyl-tRNA synthetase, editing domain"/>
    <property type="match status" value="1"/>
</dbReference>
<dbReference type="HAMAP" id="MF_02002">
    <property type="entry name" value="Ile_tRNA_synth_type1"/>
    <property type="match status" value="1"/>
</dbReference>
<dbReference type="InterPro" id="IPR001412">
    <property type="entry name" value="aa-tRNA-synth_I_CS"/>
</dbReference>
<dbReference type="InterPro" id="IPR002300">
    <property type="entry name" value="aa-tRNA-synth_Ia"/>
</dbReference>
<dbReference type="InterPro" id="IPR033708">
    <property type="entry name" value="Anticodon_Ile_BEm"/>
</dbReference>
<dbReference type="InterPro" id="IPR002301">
    <property type="entry name" value="Ile-tRNA-ligase"/>
</dbReference>
<dbReference type="InterPro" id="IPR023585">
    <property type="entry name" value="Ile-tRNA-ligase_type1"/>
</dbReference>
<dbReference type="InterPro" id="IPR050081">
    <property type="entry name" value="Ile-tRNA_ligase"/>
</dbReference>
<dbReference type="InterPro" id="IPR013155">
    <property type="entry name" value="M/V/L/I-tRNA-synth_anticd-bd"/>
</dbReference>
<dbReference type="InterPro" id="IPR014729">
    <property type="entry name" value="Rossmann-like_a/b/a_fold"/>
</dbReference>
<dbReference type="InterPro" id="IPR009080">
    <property type="entry name" value="tRNAsynth_Ia_anticodon-bd"/>
</dbReference>
<dbReference type="InterPro" id="IPR009008">
    <property type="entry name" value="Val/Leu/Ile-tRNA-synth_edit"/>
</dbReference>
<dbReference type="NCBIfam" id="TIGR00392">
    <property type="entry name" value="ileS"/>
    <property type="match status" value="1"/>
</dbReference>
<dbReference type="PANTHER" id="PTHR42765:SF1">
    <property type="entry name" value="ISOLEUCINE--TRNA LIGASE, MITOCHONDRIAL"/>
    <property type="match status" value="1"/>
</dbReference>
<dbReference type="PANTHER" id="PTHR42765">
    <property type="entry name" value="SOLEUCYL-TRNA SYNTHETASE"/>
    <property type="match status" value="1"/>
</dbReference>
<dbReference type="Pfam" id="PF08264">
    <property type="entry name" value="Anticodon_1"/>
    <property type="match status" value="1"/>
</dbReference>
<dbReference type="Pfam" id="PF00133">
    <property type="entry name" value="tRNA-synt_1"/>
    <property type="match status" value="1"/>
</dbReference>
<dbReference type="PRINTS" id="PR00984">
    <property type="entry name" value="TRNASYNTHILE"/>
</dbReference>
<dbReference type="SUPFAM" id="SSF47323">
    <property type="entry name" value="Anticodon-binding domain of a subclass of class I aminoacyl-tRNA synthetases"/>
    <property type="match status" value="1"/>
</dbReference>
<dbReference type="SUPFAM" id="SSF52374">
    <property type="entry name" value="Nucleotidylyl transferase"/>
    <property type="match status" value="1"/>
</dbReference>
<dbReference type="SUPFAM" id="SSF50677">
    <property type="entry name" value="ValRS/IleRS/LeuRS editing domain"/>
    <property type="match status" value="1"/>
</dbReference>
<dbReference type="PROSITE" id="PS00178">
    <property type="entry name" value="AA_TRNA_LIGASE_I"/>
    <property type="match status" value="1"/>
</dbReference>
<name>SYI_MYCPN</name>
<protein>
    <recommendedName>
        <fullName evidence="1">Isoleucine--tRNA ligase</fullName>
        <ecNumber evidence="1">6.1.1.5</ecNumber>
    </recommendedName>
    <alternativeName>
        <fullName evidence="1">Isoleucyl-tRNA synthetase</fullName>
        <shortName evidence="1">IleRS</shortName>
    </alternativeName>
</protein>
<accession>P75258</accession>
<evidence type="ECO:0000255" key="1">
    <source>
        <dbReference type="HAMAP-Rule" id="MF_02002"/>
    </source>
</evidence>
<feature type="chain" id="PRO_0000098424" description="Isoleucine--tRNA ligase">
    <location>
        <begin position="1"/>
        <end position="861"/>
    </location>
</feature>
<feature type="short sequence motif" description="'HIGH' region">
    <location>
        <begin position="57"/>
        <end position="67"/>
    </location>
</feature>
<feature type="short sequence motif" description="'KMSKS' region">
    <location>
        <begin position="590"/>
        <end position="594"/>
    </location>
</feature>
<feature type="binding site" evidence="1">
    <location>
        <position position="549"/>
    </location>
    <ligand>
        <name>L-isoleucyl-5'-AMP</name>
        <dbReference type="ChEBI" id="CHEBI:178002"/>
    </ligand>
</feature>
<feature type="binding site" evidence="1">
    <location>
        <position position="593"/>
    </location>
    <ligand>
        <name>ATP</name>
        <dbReference type="ChEBI" id="CHEBI:30616"/>
    </ligand>
</feature>
<organism>
    <name type="scientific">Mycoplasma pneumoniae (strain ATCC 29342 / M129 / Subtype 1)</name>
    <name type="common">Mycoplasmoides pneumoniae</name>
    <dbReference type="NCBI Taxonomy" id="272634"/>
    <lineage>
        <taxon>Bacteria</taxon>
        <taxon>Bacillati</taxon>
        <taxon>Mycoplasmatota</taxon>
        <taxon>Mycoplasmoidales</taxon>
        <taxon>Mycoplasmoidaceae</taxon>
        <taxon>Mycoplasmoides</taxon>
    </lineage>
</organism>
<sequence length="861" mass="99527">MNLKKTLLMPQTAFEMQGKLTTKEQQFQAFWQSKRIYQKLHRQNKDKPQKILHDGPPYANGNIHVGHALNKILKDFVLRSWNLQGFGTVFIPGWDCHGLPIEHAVSKKDPQHYASLSLSEKRDLCKQFALSQIAIQKAQFQRLGLLNDFSKYYKTIDESFQQNELDLFLQAVKKDLIFQALKPTYWSPVSRTSLAEAEIEYKEVKTIGLYLTFTVVQSAVLNSGTKLLVWTTTPWTLPTNQAIAVHPQFEYLLFTYNNEQYVVLASLFESLKTKFGWTDAIQVQTISGSQLQNTTYKHCLYDKVNPVLLGNHVLCNEGTGLVHTSPAYGLDDFYLCKQNKLNEALVSLDEKGVFNDTLNDPVLTGLFYLKANDVIIERLKQHHNFVFSESFLHREPHDWRSKTPVIYRASKQLFIKTKSIQSKLKRQIKRVKFVNNKNKERLQEMLLQRAEWCISRQRVWGLPIPLIYADNQPLLDVTTIKYTIQQLKKYGIDSWFEKDINFFLNPKKIQPGVEYKKETDTLEVWFDSGSTYNVLISNKLNFPADLYLEGSDQYRGWFNSSASCGIIQTDQLPFKSLISHGFTLDEHGNKMSKSLGNVVDPLKLCDQYGADILRLWVTNVDWQVDNRIGDNIIKQIVEQYRRIRNSLLRFILGNLNHFNFGEMKDYRFALEDKIVIHKTNALVQELHQWLKQYNFLNCLKAINKFVLWLSGWYFEIIKDTLYCDAKTNPNRVAKQAVLNYIFTQLIGFLNIFIPHTAEDAWQNYLLPKKPVSVNLFAGPAMFKVANVKGLDRLHESFSAIKDRAYAAIEQARQNGVITKNNQVVLTLGVDSTSAIDPTSCKTFSSLAKRKPGKYNEWPQRN</sequence>